<accession>Q66PG4</accession>
<comment type="function">
    <text evidence="2 3">Bifunctional glycosyltransferase with both alpha-1,3-xylosyltransferase and beta-1,3-glucuronyltransferase activities involved in the maturation of alpha-dystroglycan (DAG1) by glycosylation leading to DAG1 binding to laminin G-like domain-containing extracellular proteins with high affinity and in a phosphorylated-O-mannosyl trisaccharide dependent manner. Elongates the glucuronyl-beta-1,4-xylose-beta disaccharide primer structure by adding repeating units [-3-Xylose-alpha-1,3-GlcA-beta-1-] to produce a heteropolysaccharide (By similarity). Supports the maturation of DAG1 more effectively than LARGE1 (By similarity). In addition, can modify both heparan sulfate (HS)- and chondroitin/dermatan sulfate (CS/DS)-proteoglycans (PGs), namely GPC4, with a glycosaminoglycan (GAG)-like polysaccharide composed of xylose and glucuronic acid to confer laminin binding (By similarity).</text>
</comment>
<comment type="catalytic activity">
    <reaction evidence="2">
        <text>3-O-[beta-D-GlcA-(1-&gt;3)-beta-D-Xyl-(1-&gt;4)-Rib-ol-P-Rib-ol-P-3-beta-D-GalNAc-(1-&gt;3)-beta-D-GlcNAc-(1-&gt;4)-(O-6-P-alpha-D-Man)]-Thr-[protein] + UDP-alpha-D-xylose = 3-O-[alpha-D-Xyl-(1-&gt;3)-beta-D-GlcA-(1-&gt;4)-beta-D-Xyl-(1-&gt;4)-Rib-ol-P-Rib-ol-P-3-beta-D-GalNAc-(1-&gt;3)-beta-D-GlcNAc-(1-&gt;4)-(O-6-P-alpha-D-Man)]-Thr-[protein] + UDP + H(+)</text>
        <dbReference type="Rhea" id="RHEA:57336"/>
        <dbReference type="Rhea" id="RHEA-COMP:17482"/>
        <dbReference type="Rhea" id="RHEA-COMP:17483"/>
        <dbReference type="ChEBI" id="CHEBI:15378"/>
        <dbReference type="ChEBI" id="CHEBI:57632"/>
        <dbReference type="ChEBI" id="CHEBI:58223"/>
        <dbReference type="ChEBI" id="CHEBI:177336"/>
        <dbReference type="ChEBI" id="CHEBI:177352"/>
    </reaction>
    <physiologicalReaction direction="left-to-right" evidence="2">
        <dbReference type="Rhea" id="RHEA:57337"/>
    </physiologicalReaction>
</comment>
<comment type="catalytic activity">
    <reaction evidence="2">
        <text>3-O-{(1-&gt;[3)-alpha-D-Xyl-(1-&gt;3)-beta-D-GlcA-(1-&gt;](n)-4)-beta-D-Xyl-(1-&gt;4)-Rib-ol-P-Rib-ol-P-3-beta-D-GalNAc-(1-&gt;3)-beta-D-GlcNAc-(1-&gt;4)-O-6-P-alpha-D-Man}-L-Thr-[protein] + UDP-alpha-D-glucuronate = 3-O-{beta-D-GlcA-(1-&gt;[3)-alpha-D-Xyl-(1-&gt;3)-beta-D-GlcA-(1-&gt;](n)-4)-beta-D-Xyl-(1-&gt;4)-Rib-ol-P-Rib-ol-P-3-beta-D-GalNAc-(1-&gt;3)-beta-D-GlcNAc-(1-&gt;4)-O-6-P-alpha-D-Man}-L-Thr-[protein] + UDP + H(+)</text>
        <dbReference type="Rhea" id="RHEA:67924"/>
        <dbReference type="Rhea" id="RHEA-COMP:17484"/>
        <dbReference type="Rhea" id="RHEA-COMP:17486"/>
        <dbReference type="ChEBI" id="CHEBI:15378"/>
        <dbReference type="ChEBI" id="CHEBI:58052"/>
        <dbReference type="ChEBI" id="CHEBI:58223"/>
        <dbReference type="ChEBI" id="CHEBI:177354"/>
        <dbReference type="ChEBI" id="CHEBI:177355"/>
    </reaction>
    <physiologicalReaction direction="left-to-right" evidence="2">
        <dbReference type="Rhea" id="RHEA:67925"/>
    </physiologicalReaction>
</comment>
<comment type="catalytic activity">
    <reaction evidence="2">
        <text>3-O-{beta-D-GlcA-(1-&gt;[3)-alpha-D-Xyl-(1-&gt;3)-beta-D-GlcA-(1-&gt;](n)-4)-beta-D-Xyl-(1-&gt;4)-Rib-ol-P-Rib-ol-P-3-beta-D-GalNAc-(1-&gt;3)-beta-D-GlcNAc-(1-&gt;4)-O-6-P-alpha-D-Man}-L-Thr-[protein] + UDP-alpha-D-xylose = 3-O-{(1-&gt;[3)-alpha-D-Xyl-(1-&gt;3)-beta-D-GlcA-(1-&gt;](n+1)-4)-beta-D-Xyl-(1-&gt;4)-Rib-ol-P-Rib-ol-P-3-beta-D-GalNAc-(1-&gt;3)-beta-D-GlcNAc-(1-&gt;4)-O-6-P-alpha-D-Man}-L-Thr-[protein] + UDP + H(+)</text>
        <dbReference type="Rhea" id="RHEA:68368"/>
        <dbReference type="Rhea" id="RHEA-COMP:17485"/>
        <dbReference type="Rhea" id="RHEA-COMP:17486"/>
        <dbReference type="ChEBI" id="CHEBI:15378"/>
        <dbReference type="ChEBI" id="CHEBI:57632"/>
        <dbReference type="ChEBI" id="CHEBI:58223"/>
        <dbReference type="ChEBI" id="CHEBI:177354"/>
        <dbReference type="ChEBI" id="CHEBI:177355"/>
    </reaction>
    <physiologicalReaction direction="left-to-right" evidence="2">
        <dbReference type="Rhea" id="RHEA:68369"/>
    </physiologicalReaction>
</comment>
<comment type="cofactor">
    <cofactor evidence="2">
        <name>Mn(2+)</name>
        <dbReference type="ChEBI" id="CHEBI:29035"/>
    </cofactor>
    <text evidence="2">Binds 2 Mn(2+) ions per subunit. The xylosyltransferase part binds one Mn(2+) and the beta-1,3-glucuronyltransferase part binds one Mn(2+).</text>
</comment>
<comment type="pathway">
    <text evidence="2">Protein modification; protein glycosylation.</text>
</comment>
<comment type="subcellular location">
    <subcellularLocation>
        <location evidence="2">Golgi apparatus membrane</location>
        <topology evidence="2">Single-pass type II membrane protein</topology>
    </subcellularLocation>
</comment>
<comment type="similarity">
    <text evidence="6">In the C-terminal section; belongs to the glycosyltransferase 49 family.</text>
</comment>
<comment type="similarity">
    <text evidence="6">In the N-terminal section; belongs to the glycosyltransferase 8 family.</text>
</comment>
<dbReference type="EC" id="2.4.-.-" evidence="2"/>
<dbReference type="EC" id="2.4.2.-" evidence="2"/>
<dbReference type="EC" id="2.4.1.-" evidence="2"/>
<dbReference type="EMBL" id="AY662336">
    <property type="protein sequence ID" value="AAU12249.1"/>
    <property type="molecule type" value="mRNA"/>
</dbReference>
<dbReference type="RefSeq" id="NP_001004404.1">
    <property type="nucleotide sequence ID" value="NM_001004404.2"/>
</dbReference>
<dbReference type="SMR" id="Q66PG4"/>
<dbReference type="FunCoup" id="Q66PG4">
    <property type="interactions" value="20"/>
</dbReference>
<dbReference type="STRING" id="9031.ENSGALP00000037568"/>
<dbReference type="CAZy" id="GT49">
    <property type="family name" value="Glycosyltransferase Family 49"/>
</dbReference>
<dbReference type="CAZy" id="GT8">
    <property type="family name" value="Glycosyltransferase Family 8"/>
</dbReference>
<dbReference type="GlyCosmos" id="Q66PG4">
    <property type="glycosylation" value="4 sites, No reported glycans"/>
</dbReference>
<dbReference type="GlyGen" id="Q66PG4">
    <property type="glycosylation" value="4 sites"/>
</dbReference>
<dbReference type="PaxDb" id="9031-ENSGALP00000037568"/>
<dbReference type="GeneID" id="423200"/>
<dbReference type="KEGG" id="gga:423200"/>
<dbReference type="CTD" id="120071"/>
<dbReference type="VEuPathDB" id="HostDB:geneid_423200"/>
<dbReference type="eggNOG" id="KOG3765">
    <property type="taxonomic scope" value="Eukaryota"/>
</dbReference>
<dbReference type="InParanoid" id="Q66PG4"/>
<dbReference type="OrthoDB" id="411524at2759"/>
<dbReference type="PhylomeDB" id="Q66PG4"/>
<dbReference type="UniPathway" id="UPA00378"/>
<dbReference type="PRO" id="PR:Q66PG4"/>
<dbReference type="Proteomes" id="UP000000539">
    <property type="component" value="Unassembled WGS sequence"/>
</dbReference>
<dbReference type="GO" id="GO:0005794">
    <property type="term" value="C:Golgi apparatus"/>
    <property type="evidence" value="ECO:0000318"/>
    <property type="project" value="GO_Central"/>
</dbReference>
<dbReference type="GO" id="GO:0000139">
    <property type="term" value="C:Golgi membrane"/>
    <property type="evidence" value="ECO:0007669"/>
    <property type="project" value="UniProtKB-SubCell"/>
</dbReference>
<dbReference type="GO" id="GO:0015020">
    <property type="term" value="F:glucuronosyltransferase activity"/>
    <property type="evidence" value="ECO:0000250"/>
    <property type="project" value="UniProtKB"/>
</dbReference>
<dbReference type="GO" id="GO:0046872">
    <property type="term" value="F:metal ion binding"/>
    <property type="evidence" value="ECO:0007669"/>
    <property type="project" value="UniProtKB-KW"/>
</dbReference>
<dbReference type="GO" id="GO:0042285">
    <property type="term" value="F:xylosyltransferase activity"/>
    <property type="evidence" value="ECO:0000250"/>
    <property type="project" value="UniProtKB"/>
</dbReference>
<dbReference type="GO" id="GO:0035269">
    <property type="term" value="P:protein O-linked mannosylation"/>
    <property type="evidence" value="ECO:0000250"/>
    <property type="project" value="UniProtKB"/>
</dbReference>
<dbReference type="CDD" id="cd06431">
    <property type="entry name" value="GT8_LARGE_C"/>
    <property type="match status" value="1"/>
</dbReference>
<dbReference type="FunFam" id="3.90.550.10:FF:000229">
    <property type="entry name" value="Glycosyltransferase-like protein LARGE"/>
    <property type="match status" value="1"/>
</dbReference>
<dbReference type="FunFam" id="3.90.550.10:FF:000016">
    <property type="entry name" value="LARGE xylosyl- and glucuronyltransferase 2"/>
    <property type="match status" value="1"/>
</dbReference>
<dbReference type="Gene3D" id="3.90.550.10">
    <property type="entry name" value="Spore Coat Polysaccharide Biosynthesis Protein SpsA, Chain A"/>
    <property type="match status" value="1"/>
</dbReference>
<dbReference type="InterPro" id="IPR002495">
    <property type="entry name" value="Glyco_trans_8"/>
</dbReference>
<dbReference type="InterPro" id="IPR029044">
    <property type="entry name" value="Nucleotide-diphossugar_trans"/>
</dbReference>
<dbReference type="InterPro" id="IPR051292">
    <property type="entry name" value="Xyl/GlcA_transferase"/>
</dbReference>
<dbReference type="PANTHER" id="PTHR12270">
    <property type="entry name" value="GLYCOSYLTRANSFERASE-RELATED"/>
    <property type="match status" value="1"/>
</dbReference>
<dbReference type="PANTHER" id="PTHR12270:SF23">
    <property type="entry name" value="XYLOSYL- AND GLUCURONYLTRANSFERASE LARGE2"/>
    <property type="match status" value="1"/>
</dbReference>
<dbReference type="Pfam" id="PF13896">
    <property type="entry name" value="Glyco_transf_49"/>
    <property type="match status" value="2"/>
</dbReference>
<dbReference type="Pfam" id="PF01501">
    <property type="entry name" value="Glyco_transf_8"/>
    <property type="match status" value="1"/>
</dbReference>
<dbReference type="SUPFAM" id="SSF53448">
    <property type="entry name" value="Nucleotide-diphospho-sugar transferases"/>
    <property type="match status" value="1"/>
</dbReference>
<evidence type="ECO:0000250" key="1">
    <source>
        <dbReference type="UniProtKB" id="O95461"/>
    </source>
</evidence>
<evidence type="ECO:0000250" key="2">
    <source>
        <dbReference type="UniProtKB" id="Q5XPT3"/>
    </source>
</evidence>
<evidence type="ECO:0000250" key="3">
    <source>
        <dbReference type="UniProtKB" id="Q8N3Y3"/>
    </source>
</evidence>
<evidence type="ECO:0000255" key="4"/>
<evidence type="ECO:0000256" key="5">
    <source>
        <dbReference type="SAM" id="MobiDB-lite"/>
    </source>
</evidence>
<evidence type="ECO:0000305" key="6"/>
<feature type="chain" id="PRO_0000226814" description="Xylosyl- and glucuronyltransferase LARGE2s">
    <location>
        <begin position="1"/>
        <end position="739"/>
    </location>
</feature>
<feature type="topological domain" description="Cytoplasmic" evidence="4">
    <location>
        <begin position="1"/>
        <end position="10"/>
    </location>
</feature>
<feature type="transmembrane region" description="Helical; Signal-anchor for type II membrane protein" evidence="4">
    <location>
        <begin position="11"/>
        <end position="31"/>
    </location>
</feature>
<feature type="topological domain" description="Lumenal" evidence="4">
    <location>
        <begin position="32"/>
        <end position="739"/>
    </location>
</feature>
<feature type="region of interest" description="Disordered" evidence="5">
    <location>
        <begin position="80"/>
        <end position="105"/>
    </location>
</feature>
<feature type="region of interest" description="Xylosyltransferase activity" evidence="1">
    <location>
        <begin position="121"/>
        <end position="396"/>
    </location>
</feature>
<feature type="region of interest" description="Glucuronyltransferase activity" evidence="1">
    <location>
        <begin position="397"/>
        <end position="739"/>
    </location>
</feature>
<feature type="binding site" evidence="3">
    <location>
        <position position="225"/>
    </location>
    <ligand>
        <name>Mn(2+)</name>
        <dbReference type="ChEBI" id="CHEBI:29035"/>
        <label>1</label>
    </ligand>
</feature>
<feature type="binding site" evidence="3">
    <location>
        <position position="227"/>
    </location>
    <ligand>
        <name>Mn(2+)</name>
        <dbReference type="ChEBI" id="CHEBI:29035"/>
        <label>1</label>
    </ligand>
</feature>
<feature type="binding site" evidence="3">
    <location>
        <position position="546"/>
    </location>
    <ligand>
        <name>Mn(2+)</name>
        <dbReference type="ChEBI" id="CHEBI:29035"/>
        <label>2</label>
    </ligand>
</feature>
<feature type="binding site" evidence="3">
    <location>
        <position position="548"/>
    </location>
    <ligand>
        <name>Mn(2+)</name>
        <dbReference type="ChEBI" id="CHEBI:29035"/>
        <label>2</label>
    </ligand>
</feature>
<feature type="glycosylation site" description="N-linked (GlcNAc...) asparagine" evidence="4">
    <location>
        <position position="105"/>
    </location>
</feature>
<feature type="glycosylation site" description="N-linked (GlcNAc...) asparagine" evidence="4">
    <location>
        <position position="131"/>
    </location>
</feature>
<feature type="glycosylation site" description="N-linked (GlcNAc...) asparagine" evidence="4">
    <location>
        <position position="217"/>
    </location>
</feature>
<feature type="glycosylation site" description="N-linked (GlcNAc...) asparagine" evidence="4">
    <location>
        <position position="255"/>
    </location>
</feature>
<gene>
    <name evidence="3" type="primary">LARGE2</name>
    <name type="synonym">GYLTL1B</name>
</gene>
<proteinExistence type="evidence at transcript level"/>
<protein>
    <recommendedName>
        <fullName evidence="3">Xylosyl- and glucuronyltransferase LARGE2s</fullName>
        <ecNumber evidence="2">2.4.-.-</ecNumber>
    </recommendedName>
    <alternativeName>
        <fullName>Glycosyltransferase-like 1B</fullName>
    </alternativeName>
    <alternativeName>
        <fullName evidence="3">LARGE xylosyl- and glucuronyltransferase 2</fullName>
    </alternativeName>
    <domain>
        <recommendedName>
            <fullName evidence="6">Alpha-1,3-xylosyltransferase LARGE2</fullName>
            <ecNumber evidence="2">2.4.2.-</ecNumber>
        </recommendedName>
    </domain>
    <domain>
        <recommendedName>
            <fullName evidence="6">Beta-1,3-glucuronyltransferase LARGE2</fullName>
            <ecNumber evidence="2">2.4.1.-</ecNumber>
        </recommendedName>
    </domain>
</protein>
<sequence length="739" mass="85568">MLCSWRVKLKLLLATITLAVLLSWLYLFVGSLEYGRFLLLPPCLGEQPSRDVEREALASQVRRVEEENQQLRMQLGQVQAEGSDGNPQWAASAEDGPPLGGERNNRTACPEQRMVRKCELLHVAIVCAGHNASRDVVTLVKSILFHRKNPLHFHFITDSVAHQILQTLFQSWMVPSIHVSFYNADDLKPEVSWIPNKHYSGIYGLMKLTLTKALPSNLSKVIVLDTDITFATDIAELWAVFGKFSEKQVIGLVENQSDWYLGNLWKNHKPWPALGRGFNTGVILLLLDRLRRLGWEQMWRLTAERELMSMLSTSLADQDIFNAVIKQNPALVYRLPCFWNVQLSDHTRSELCYTEVSDLKVIHWNSPKKLRVKNKHVEFFRNLYLTFLEYDGNLLRRELFGCASLPSPPSDQLQQALEELDEDDPCYDFRRQHLTQHRVHLFFLQYEFLALPNPTDVTLVAQLSMDRLQMLEAICKHWAGPISLALYMSDAEAQQFLRYAQASEVLSARRNVAYHIVYKEGQFYPINLLRNVALANTQTPYVFLTDIDFLPMYGLYDYLRNSIQQLELPHRKAALIVPAFETLHYRLTFPKSKAELLSMLDMGSLYTFRYHVWPKGHAPTDYAKWRTATVPYRVAWQPDFEPYVVVRRDCPKYDQRFVGFGWNKVSHIMELDAQEYELLVLPNAFMIHMPHAPSFDISKFRLSAGYRGCLQTLREEFHQDLSRKYGAAALKYLTAERNL</sequence>
<keyword id="KW-0325">Glycoprotein</keyword>
<keyword id="KW-0328">Glycosyltransferase</keyword>
<keyword id="KW-0333">Golgi apparatus</keyword>
<keyword id="KW-0464">Manganese</keyword>
<keyword id="KW-0472">Membrane</keyword>
<keyword id="KW-0479">Metal-binding</keyword>
<keyword id="KW-0511">Multifunctional enzyme</keyword>
<keyword id="KW-1185">Reference proteome</keyword>
<keyword id="KW-0735">Signal-anchor</keyword>
<keyword id="KW-0808">Transferase</keyword>
<keyword id="KW-0812">Transmembrane</keyword>
<keyword id="KW-1133">Transmembrane helix</keyword>
<organism>
    <name type="scientific">Gallus gallus</name>
    <name type="common">Chicken</name>
    <dbReference type="NCBI Taxonomy" id="9031"/>
    <lineage>
        <taxon>Eukaryota</taxon>
        <taxon>Metazoa</taxon>
        <taxon>Chordata</taxon>
        <taxon>Craniata</taxon>
        <taxon>Vertebrata</taxon>
        <taxon>Euteleostomi</taxon>
        <taxon>Archelosauria</taxon>
        <taxon>Archosauria</taxon>
        <taxon>Dinosauria</taxon>
        <taxon>Saurischia</taxon>
        <taxon>Theropoda</taxon>
        <taxon>Coelurosauria</taxon>
        <taxon>Aves</taxon>
        <taxon>Neognathae</taxon>
        <taxon>Galloanserae</taxon>
        <taxon>Galliformes</taxon>
        <taxon>Phasianidae</taxon>
        <taxon>Phasianinae</taxon>
        <taxon>Gallus</taxon>
    </lineage>
</organism>
<name>LARG2_CHICK</name>
<reference key="1">
    <citation type="journal article" date="2005" name="Glycobiology">
        <title>Characterization of the LARGE family of putative glycosyltransferases associated with dystroglycanopathies.</title>
        <authorList>
            <person name="Grewal P.K."/>
            <person name="McLaughlan J.M."/>
            <person name="Moore C.J."/>
            <person name="Browning C.A."/>
            <person name="Hewitt J.E."/>
        </authorList>
    </citation>
    <scope>NUCLEOTIDE SEQUENCE [MRNA]</scope>
</reference>